<organism>
    <name type="scientific">Danio rerio</name>
    <name type="common">Zebrafish</name>
    <name type="synonym">Brachydanio rerio</name>
    <dbReference type="NCBI Taxonomy" id="7955"/>
    <lineage>
        <taxon>Eukaryota</taxon>
        <taxon>Metazoa</taxon>
        <taxon>Chordata</taxon>
        <taxon>Craniata</taxon>
        <taxon>Vertebrata</taxon>
        <taxon>Euteleostomi</taxon>
        <taxon>Actinopterygii</taxon>
        <taxon>Neopterygii</taxon>
        <taxon>Teleostei</taxon>
        <taxon>Ostariophysi</taxon>
        <taxon>Cypriniformes</taxon>
        <taxon>Danionidae</taxon>
        <taxon>Danioninae</taxon>
        <taxon>Danio</taxon>
    </lineage>
</organism>
<name>NAGS_DANRE</name>
<protein>
    <recommendedName>
        <fullName evidence="8">N-acetylglutamate synthase, mitochondrial</fullName>
        <ecNumber evidence="6">2.3.1.1</ecNumber>
    </recommendedName>
    <component>
        <recommendedName>
            <fullName evidence="7">N-acetylglutamate synthase, mature form</fullName>
            <shortName evidence="7">NAGS-M</shortName>
        </recommendedName>
    </component>
    <component>
        <recommendedName>
            <fullName evidence="7">N-acetylglutamate synthase, conserved domain form</fullName>
            <shortName evidence="7">NAGS-C</shortName>
        </recommendedName>
    </component>
</protein>
<evidence type="ECO:0000250" key="1">
    <source>
        <dbReference type="UniProtKB" id="Q8N159"/>
    </source>
</evidence>
<evidence type="ECO:0000255" key="2"/>
<evidence type="ECO:0000255" key="3">
    <source>
        <dbReference type="PIRSR" id="PIRSR036442-1"/>
    </source>
</evidence>
<evidence type="ECO:0000255" key="4">
    <source>
        <dbReference type="PROSITE-ProRule" id="PRU00532"/>
    </source>
</evidence>
<evidence type="ECO:0000256" key="5">
    <source>
        <dbReference type="SAM" id="MobiDB-lite"/>
    </source>
</evidence>
<evidence type="ECO:0000269" key="6">
    <source>
    </source>
</evidence>
<evidence type="ECO:0000303" key="7">
    <source>
    </source>
</evidence>
<evidence type="ECO:0000305" key="8"/>
<evidence type="ECO:0000305" key="9">
    <source>
    </source>
</evidence>
<evidence type="ECO:0000312" key="10">
    <source>
        <dbReference type="ZFIN" id="ZDB-GENE-121219-2"/>
    </source>
</evidence>
<comment type="function">
    <text evidence="9">Plays a role in the regulation of ureagenesis by producing the essential cofactor N-acetylglutamate (NAG), thus modulating carbamoylphosphate synthase I (cps1) activity.</text>
</comment>
<comment type="catalytic activity">
    <reaction evidence="6">
        <text>L-glutamate + acetyl-CoA = N-acetyl-L-glutamate + CoA + H(+)</text>
        <dbReference type="Rhea" id="RHEA:24292"/>
        <dbReference type="ChEBI" id="CHEBI:15378"/>
        <dbReference type="ChEBI" id="CHEBI:29985"/>
        <dbReference type="ChEBI" id="CHEBI:44337"/>
        <dbReference type="ChEBI" id="CHEBI:57287"/>
        <dbReference type="ChEBI" id="CHEBI:57288"/>
        <dbReference type="EC" id="2.3.1.1"/>
    </reaction>
</comment>
<comment type="activity regulation">
    <text evidence="6">Inhibited by L-arginine.</text>
</comment>
<comment type="biophysicochemical properties">
    <kinetics>
        <KM evidence="6">0.22 mM for acetyl-CoA</KM>
        <KM evidence="6">1.13 mM for L-glutamate</KM>
    </kinetics>
</comment>
<comment type="subunit">
    <text evidence="1 6">Homodimer (By similarity). Homotetramer (PubMed:24465614).</text>
</comment>
<comment type="subcellular location">
    <subcellularLocation>
        <location evidence="1">Mitochondrion matrix</location>
    </subcellularLocation>
</comment>
<comment type="developmental stage">
    <text evidence="6">Detected in 32-cell embryos, probably due to perdurance of maternal transcripts. Has low expression at the 90% epiboly and tailbud stages (9-10 hours post-fertilization, hpf). Moderately expressed from 24 hpf onwards, and strongly expressed at the adult stage.</text>
</comment>
<comment type="domain">
    <text evidence="1">The amino-acid kinase (AAK) domain mediates binding of L-arginine.</text>
</comment>
<comment type="similarity">
    <text evidence="8">Belongs to the acetyltransferase family.</text>
</comment>
<keyword id="KW-0012">Acyltransferase</keyword>
<keyword id="KW-0496">Mitochondrion</keyword>
<keyword id="KW-1185">Reference proteome</keyword>
<keyword id="KW-0808">Transferase</keyword>
<keyword id="KW-0809">Transit peptide</keyword>
<keyword id="KW-0835">Urea cycle</keyword>
<feature type="transit peptide" description="Mitochondrion" evidence="2">
    <location>
        <begin position="1"/>
        <end position="39"/>
    </location>
</feature>
<feature type="chain" id="PRO_0000444987" description="N-acetylglutamate synthase, mature form" evidence="8">
    <location>
        <begin position="40"/>
        <end position="527"/>
    </location>
</feature>
<feature type="chain" id="PRO_0000444988" description="N-acetylglutamate synthase, conserved domain form" evidence="8">
    <location>
        <begin position="84"/>
        <end position="527"/>
    </location>
</feature>
<feature type="domain" description="N-acetyltransferase" evidence="4">
    <location>
        <begin position="360"/>
        <end position="511"/>
    </location>
</feature>
<feature type="region of interest" description="Disordered" evidence="5">
    <location>
        <begin position="28"/>
        <end position="65"/>
    </location>
</feature>
<feature type="region of interest" description="Amino-acid kinase domain (AAK)" evidence="1">
    <location>
        <begin position="40"/>
        <end position="361"/>
    </location>
</feature>
<feature type="region of interest" description="May stabilize the oligomeric structure" evidence="6">
    <location>
        <begin position="40"/>
        <end position="83"/>
    </location>
</feature>
<feature type="binding site" evidence="3">
    <location>
        <position position="386"/>
    </location>
    <ligand>
        <name>substrate</name>
    </ligand>
</feature>
<feature type="binding site" evidence="3">
    <location>
        <position position="429"/>
    </location>
    <ligand>
        <name>substrate</name>
    </ligand>
</feature>
<feature type="binding site" evidence="1">
    <location>
        <begin position="459"/>
        <end position="464"/>
    </location>
    <ligand>
        <name>substrate</name>
    </ligand>
</feature>
<accession>E7FCP8</accession>
<proteinExistence type="evidence at protein level"/>
<gene>
    <name evidence="10" type="primary">nags</name>
</gene>
<dbReference type="EC" id="2.3.1.1" evidence="6"/>
<dbReference type="EMBL" id="AL935200">
    <property type="status" value="NOT_ANNOTATED_CDS"/>
    <property type="molecule type" value="Genomic_DNA"/>
</dbReference>
<dbReference type="RefSeq" id="XP_685919.3">
    <property type="nucleotide sequence ID" value="XM_680827.10"/>
</dbReference>
<dbReference type="SMR" id="E7FCP8"/>
<dbReference type="FunCoup" id="E7FCP8">
    <property type="interactions" value="118"/>
</dbReference>
<dbReference type="STRING" id="7955.ENSDARP00000101563"/>
<dbReference type="PaxDb" id="7955-ENSDARP00000101563"/>
<dbReference type="Ensembl" id="ENSDART00000110343">
    <property type="protein sequence ID" value="ENSDARP00000101563"/>
    <property type="gene ID" value="ENSDARG00000077193"/>
</dbReference>
<dbReference type="GeneID" id="557716"/>
<dbReference type="AGR" id="ZFIN:ZDB-GENE-121219-2"/>
<dbReference type="CTD" id="162417"/>
<dbReference type="ZFIN" id="ZDB-GENE-121219-2">
    <property type="gene designation" value="nags"/>
</dbReference>
<dbReference type="eggNOG" id="KOG2436">
    <property type="taxonomic scope" value="Eukaryota"/>
</dbReference>
<dbReference type="HOGENOM" id="CLU_034853_0_0_1"/>
<dbReference type="InParanoid" id="E7FCP8"/>
<dbReference type="OMA" id="NHQWIFF"/>
<dbReference type="OrthoDB" id="438291at2759"/>
<dbReference type="PhylomeDB" id="E7FCP8"/>
<dbReference type="TreeFam" id="TF332628"/>
<dbReference type="Reactome" id="R-DRE-70635">
    <property type="pathway name" value="Urea cycle"/>
</dbReference>
<dbReference type="PRO" id="PR:E7FCP8"/>
<dbReference type="Proteomes" id="UP000000437">
    <property type="component" value="Chromosome 3"/>
</dbReference>
<dbReference type="Bgee" id="ENSDARG00000077193">
    <property type="expression patterns" value="Expressed in ovary and 8 other cell types or tissues"/>
</dbReference>
<dbReference type="ExpressionAtlas" id="E7FCP8">
    <property type="expression patterns" value="baseline and differential"/>
</dbReference>
<dbReference type="GO" id="GO:0005759">
    <property type="term" value="C:mitochondrial matrix"/>
    <property type="evidence" value="ECO:0000318"/>
    <property type="project" value="GO_Central"/>
</dbReference>
<dbReference type="GO" id="GO:0034618">
    <property type="term" value="F:arginine binding"/>
    <property type="evidence" value="ECO:0000314"/>
    <property type="project" value="ZFIN"/>
</dbReference>
<dbReference type="GO" id="GO:0004042">
    <property type="term" value="F:L-glutamate N-acetyltransferase activity"/>
    <property type="evidence" value="ECO:0000314"/>
    <property type="project" value="ZFIN"/>
</dbReference>
<dbReference type="GO" id="GO:0006536">
    <property type="term" value="P:glutamate metabolic process"/>
    <property type="evidence" value="ECO:0000318"/>
    <property type="project" value="GO_Central"/>
</dbReference>
<dbReference type="GO" id="GO:0006526">
    <property type="term" value="P:L-arginine biosynthetic process"/>
    <property type="evidence" value="ECO:0000318"/>
    <property type="project" value="GO_Central"/>
</dbReference>
<dbReference type="GO" id="GO:0000050">
    <property type="term" value="P:urea cycle"/>
    <property type="evidence" value="ECO:0007669"/>
    <property type="project" value="UniProtKB-KW"/>
</dbReference>
<dbReference type="CDD" id="cd04265">
    <property type="entry name" value="DUF619-NAGS-U"/>
    <property type="match status" value="1"/>
</dbReference>
<dbReference type="FunFam" id="3.40.1160.10:FF:000026">
    <property type="entry name" value="N-acetylglutamate synthase, mitochondrial"/>
    <property type="match status" value="1"/>
</dbReference>
<dbReference type="FunFam" id="3.40.630.30:FF:000045">
    <property type="entry name" value="N-acetylglutamate synthase, mitochondrial"/>
    <property type="match status" value="1"/>
</dbReference>
<dbReference type="Gene3D" id="3.40.630.30">
    <property type="match status" value="1"/>
</dbReference>
<dbReference type="Gene3D" id="3.40.1160.10">
    <property type="entry name" value="Acetylglutamate kinase-like"/>
    <property type="match status" value="1"/>
</dbReference>
<dbReference type="InterPro" id="IPR036393">
    <property type="entry name" value="AceGlu_kinase-like_sf"/>
</dbReference>
<dbReference type="InterPro" id="IPR016181">
    <property type="entry name" value="Acyl_CoA_acyltransferase"/>
</dbReference>
<dbReference type="InterPro" id="IPR011243">
    <property type="entry name" value="GlcNAc_Synth_met"/>
</dbReference>
<dbReference type="InterPro" id="IPR006855">
    <property type="entry name" value="Vertebrate-like_GNAT_dom"/>
</dbReference>
<dbReference type="PANTHER" id="PTHR23342">
    <property type="entry name" value="N-ACETYLGLUTAMATE SYNTHASE"/>
    <property type="match status" value="1"/>
</dbReference>
<dbReference type="PANTHER" id="PTHR23342:SF0">
    <property type="entry name" value="N-ACETYLGLUTAMATE SYNTHASE, MITOCHONDRIAL"/>
    <property type="match status" value="1"/>
</dbReference>
<dbReference type="Pfam" id="PF04768">
    <property type="entry name" value="NAT"/>
    <property type="match status" value="1"/>
</dbReference>
<dbReference type="PIRSF" id="PIRSF036442">
    <property type="entry name" value="NAGS_animal"/>
    <property type="match status" value="1"/>
</dbReference>
<dbReference type="SUPFAM" id="SSF55729">
    <property type="entry name" value="Acyl-CoA N-acyltransferases (Nat)"/>
    <property type="match status" value="1"/>
</dbReference>
<dbReference type="SUPFAM" id="SSF53633">
    <property type="entry name" value="Carbamate kinase-like"/>
    <property type="match status" value="1"/>
</dbReference>
<dbReference type="PROSITE" id="PS51731">
    <property type="entry name" value="GNAT_NAGS"/>
    <property type="match status" value="1"/>
</dbReference>
<reference key="1">
    <citation type="journal article" date="2013" name="Nature">
        <title>The zebrafish reference genome sequence and its relationship to the human genome.</title>
        <authorList>
            <person name="Howe K."/>
            <person name="Clark M.D."/>
            <person name="Torroja C.F."/>
            <person name="Torrance J."/>
            <person name="Berthelot C."/>
            <person name="Muffato M."/>
            <person name="Collins J.E."/>
            <person name="Humphray S."/>
            <person name="McLaren K."/>
            <person name="Matthews L."/>
            <person name="McLaren S."/>
            <person name="Sealy I."/>
            <person name="Caccamo M."/>
            <person name="Churcher C."/>
            <person name="Scott C."/>
            <person name="Barrett J.C."/>
            <person name="Koch R."/>
            <person name="Rauch G.J."/>
            <person name="White S."/>
            <person name="Chow W."/>
            <person name="Kilian B."/>
            <person name="Quintais L.T."/>
            <person name="Guerra-Assuncao J.A."/>
            <person name="Zhou Y."/>
            <person name="Gu Y."/>
            <person name="Yen J."/>
            <person name="Vogel J.H."/>
            <person name="Eyre T."/>
            <person name="Redmond S."/>
            <person name="Banerjee R."/>
            <person name="Chi J."/>
            <person name="Fu B."/>
            <person name="Langley E."/>
            <person name="Maguire S.F."/>
            <person name="Laird G.K."/>
            <person name="Lloyd D."/>
            <person name="Kenyon E."/>
            <person name="Donaldson S."/>
            <person name="Sehra H."/>
            <person name="Almeida-King J."/>
            <person name="Loveland J."/>
            <person name="Trevanion S."/>
            <person name="Jones M."/>
            <person name="Quail M."/>
            <person name="Willey D."/>
            <person name="Hunt A."/>
            <person name="Burton J."/>
            <person name="Sims S."/>
            <person name="McLay K."/>
            <person name="Plumb B."/>
            <person name="Davis J."/>
            <person name="Clee C."/>
            <person name="Oliver K."/>
            <person name="Clark R."/>
            <person name="Riddle C."/>
            <person name="Elliot D."/>
            <person name="Threadgold G."/>
            <person name="Harden G."/>
            <person name="Ware D."/>
            <person name="Begum S."/>
            <person name="Mortimore B."/>
            <person name="Kerry G."/>
            <person name="Heath P."/>
            <person name="Phillimore B."/>
            <person name="Tracey A."/>
            <person name="Corby N."/>
            <person name="Dunn M."/>
            <person name="Johnson C."/>
            <person name="Wood J."/>
            <person name="Clark S."/>
            <person name="Pelan S."/>
            <person name="Griffiths G."/>
            <person name="Smith M."/>
            <person name="Glithero R."/>
            <person name="Howden P."/>
            <person name="Barker N."/>
            <person name="Lloyd C."/>
            <person name="Stevens C."/>
            <person name="Harley J."/>
            <person name="Holt K."/>
            <person name="Panagiotidis G."/>
            <person name="Lovell J."/>
            <person name="Beasley H."/>
            <person name="Henderson C."/>
            <person name="Gordon D."/>
            <person name="Auger K."/>
            <person name="Wright D."/>
            <person name="Collins J."/>
            <person name="Raisen C."/>
            <person name="Dyer L."/>
            <person name="Leung K."/>
            <person name="Robertson L."/>
            <person name="Ambridge K."/>
            <person name="Leongamornlert D."/>
            <person name="McGuire S."/>
            <person name="Gilderthorp R."/>
            <person name="Griffiths C."/>
            <person name="Manthravadi D."/>
            <person name="Nichol S."/>
            <person name="Barker G."/>
            <person name="Whitehead S."/>
            <person name="Kay M."/>
            <person name="Brown J."/>
            <person name="Murnane C."/>
            <person name="Gray E."/>
            <person name="Humphries M."/>
            <person name="Sycamore N."/>
            <person name="Barker D."/>
            <person name="Saunders D."/>
            <person name="Wallis J."/>
            <person name="Babbage A."/>
            <person name="Hammond S."/>
            <person name="Mashreghi-Mohammadi M."/>
            <person name="Barr L."/>
            <person name="Martin S."/>
            <person name="Wray P."/>
            <person name="Ellington A."/>
            <person name="Matthews N."/>
            <person name="Ellwood M."/>
            <person name="Woodmansey R."/>
            <person name="Clark G."/>
            <person name="Cooper J."/>
            <person name="Tromans A."/>
            <person name="Grafham D."/>
            <person name="Skuce C."/>
            <person name="Pandian R."/>
            <person name="Andrews R."/>
            <person name="Harrison E."/>
            <person name="Kimberley A."/>
            <person name="Garnett J."/>
            <person name="Fosker N."/>
            <person name="Hall R."/>
            <person name="Garner P."/>
            <person name="Kelly D."/>
            <person name="Bird C."/>
            <person name="Palmer S."/>
            <person name="Gehring I."/>
            <person name="Berger A."/>
            <person name="Dooley C.M."/>
            <person name="Ersan-Urun Z."/>
            <person name="Eser C."/>
            <person name="Geiger H."/>
            <person name="Geisler M."/>
            <person name="Karotki L."/>
            <person name="Kirn A."/>
            <person name="Konantz J."/>
            <person name="Konantz M."/>
            <person name="Oberlander M."/>
            <person name="Rudolph-Geiger S."/>
            <person name="Teucke M."/>
            <person name="Lanz C."/>
            <person name="Raddatz G."/>
            <person name="Osoegawa K."/>
            <person name="Zhu B."/>
            <person name="Rapp A."/>
            <person name="Widaa S."/>
            <person name="Langford C."/>
            <person name="Yang F."/>
            <person name="Schuster S.C."/>
            <person name="Carter N.P."/>
            <person name="Harrow J."/>
            <person name="Ning Z."/>
            <person name="Herrero J."/>
            <person name="Searle S.M."/>
            <person name="Enright A."/>
            <person name="Geisler R."/>
            <person name="Plasterk R.H."/>
            <person name="Lee C."/>
            <person name="Westerfield M."/>
            <person name="de Jong P.J."/>
            <person name="Zon L.I."/>
            <person name="Postlethwait J.H."/>
            <person name="Nusslein-Volhard C."/>
            <person name="Hubbard T.J."/>
            <person name="Roest Crollius H."/>
            <person name="Rogers J."/>
            <person name="Stemple D.L."/>
        </authorList>
    </citation>
    <scope>NUCLEOTIDE SEQUENCE [LARGE SCALE GENOMIC DNA]</scope>
    <source>
        <strain>Tuebingen</strain>
    </source>
</reference>
<reference key="2">
    <citation type="journal article" date="2014" name="PLoS ONE">
        <title>Expression pattern and biochemical properties of zebrafish N-acetylglutamate synthase.</title>
        <authorList>
            <person name="Caldovic L."/>
            <person name="Haskins N."/>
            <person name="Mumo A."/>
            <person name="Majumdar H."/>
            <person name="Pinter M."/>
            <person name="Tuchman M."/>
            <person name="Krufka A."/>
        </authorList>
    </citation>
    <scope>FUNCTION</scope>
    <scope>CATALYTIC ACTIVITY</scope>
    <scope>ACTIVITY REGULATION</scope>
    <scope>BIOPHYSICOCHEMICAL PROPERTIES</scope>
    <scope>SUBUNIT</scope>
    <scope>DEVELOPMENTAL STAGE</scope>
</reference>
<sequence length="527" mass="58407">MAKVNSGSSGCRAMVMAGQFWTKPFALSSQRSGPHRRSAAEVNRRMSSSRTAGHGSKTPLWSQQESYNHSSLGERSAWSNRTLIYRDVKAFLREIGGDPREARYWLTHFQRAGSTPAFAVLEVDPSVFDSHEMVQSLAFGLSFLQRMDMKLVVVMGLPAEITEDDHTRSATDSPLARTVMVKHCQALTEALQDNSANVMPFFSSEALLQLQDNPLDGSSSGPSVVVDSALLQWTLDCRVIPLVCPVGRDTTGRSSVLRSIQVTTAISQTLQPLKVIFLNSSGGIRNQNHKVLGLVSLPGDLPALSCAEWLNEVEQKRIGSIAELLNLLPVESSAVLTSANTLLTELFSHKGSGTLFKNGDPIRRYSSLEDIDVDRLLALINKSFEKNLREDYIASLEGRLHSVYLSEGYSAAAIITTEPVNSGTPYLDKFVVSSSKQGQGTGQILWECIRQDFSKLFWRSRTTNRINPWYFKHCDGSFVNGHWIVFWLGLSDIRESYELVEFAKSHPDSFCSLSTTETKPLQQHHGS</sequence>